<accession>Q92AV0</accession>
<feature type="chain" id="PRO_0000291410" description="UPF0435 protein lin1819">
    <location>
        <begin position="1"/>
        <end position="73"/>
    </location>
</feature>
<comment type="similarity">
    <text evidence="1">Belongs to the UPF0435 family.</text>
</comment>
<proteinExistence type="inferred from homology"/>
<organism>
    <name type="scientific">Listeria innocua serovar 6a (strain ATCC BAA-680 / CLIP 11262)</name>
    <dbReference type="NCBI Taxonomy" id="272626"/>
    <lineage>
        <taxon>Bacteria</taxon>
        <taxon>Bacillati</taxon>
        <taxon>Bacillota</taxon>
        <taxon>Bacilli</taxon>
        <taxon>Bacillales</taxon>
        <taxon>Listeriaceae</taxon>
        <taxon>Listeria</taxon>
    </lineage>
</organism>
<evidence type="ECO:0000255" key="1">
    <source>
        <dbReference type="HAMAP-Rule" id="MF_00829"/>
    </source>
</evidence>
<reference key="1">
    <citation type="journal article" date="2001" name="Science">
        <title>Comparative genomics of Listeria species.</title>
        <authorList>
            <person name="Glaser P."/>
            <person name="Frangeul L."/>
            <person name="Buchrieser C."/>
            <person name="Rusniok C."/>
            <person name="Amend A."/>
            <person name="Baquero F."/>
            <person name="Berche P."/>
            <person name="Bloecker H."/>
            <person name="Brandt P."/>
            <person name="Chakraborty T."/>
            <person name="Charbit A."/>
            <person name="Chetouani F."/>
            <person name="Couve E."/>
            <person name="de Daruvar A."/>
            <person name="Dehoux P."/>
            <person name="Domann E."/>
            <person name="Dominguez-Bernal G."/>
            <person name="Duchaud E."/>
            <person name="Durant L."/>
            <person name="Dussurget O."/>
            <person name="Entian K.-D."/>
            <person name="Fsihi H."/>
            <person name="Garcia-del Portillo F."/>
            <person name="Garrido P."/>
            <person name="Gautier L."/>
            <person name="Goebel W."/>
            <person name="Gomez-Lopez N."/>
            <person name="Hain T."/>
            <person name="Hauf J."/>
            <person name="Jackson D."/>
            <person name="Jones L.-M."/>
            <person name="Kaerst U."/>
            <person name="Kreft J."/>
            <person name="Kuhn M."/>
            <person name="Kunst F."/>
            <person name="Kurapkat G."/>
            <person name="Madueno E."/>
            <person name="Maitournam A."/>
            <person name="Mata Vicente J."/>
            <person name="Ng E."/>
            <person name="Nedjari H."/>
            <person name="Nordsiek G."/>
            <person name="Novella S."/>
            <person name="de Pablos B."/>
            <person name="Perez-Diaz J.-C."/>
            <person name="Purcell R."/>
            <person name="Remmel B."/>
            <person name="Rose M."/>
            <person name="Schlueter T."/>
            <person name="Simoes N."/>
            <person name="Tierrez A."/>
            <person name="Vazquez-Boland J.-A."/>
            <person name="Voss H."/>
            <person name="Wehland J."/>
            <person name="Cossart P."/>
        </authorList>
    </citation>
    <scope>NUCLEOTIDE SEQUENCE [LARGE SCALE GENOMIC DNA]</scope>
    <source>
        <strain>ATCC BAA-680 / CLIP 11262</strain>
    </source>
</reference>
<name>Y1819_LISIN</name>
<protein>
    <recommendedName>
        <fullName evidence="1">UPF0435 protein lin1819</fullName>
    </recommendedName>
</protein>
<dbReference type="EMBL" id="AL596170">
    <property type="protein sequence ID" value="CAC97050.1"/>
    <property type="molecule type" value="Genomic_DNA"/>
</dbReference>
<dbReference type="PIR" id="AB1660">
    <property type="entry name" value="AB1660"/>
</dbReference>
<dbReference type="RefSeq" id="WP_003768985.1">
    <property type="nucleotide sequence ID" value="NC_003212.1"/>
</dbReference>
<dbReference type="SMR" id="Q92AV0"/>
<dbReference type="STRING" id="272626.gene:17566174"/>
<dbReference type="KEGG" id="lin:lin1819"/>
<dbReference type="eggNOG" id="COG4840">
    <property type="taxonomic scope" value="Bacteria"/>
</dbReference>
<dbReference type="HOGENOM" id="CLU_199533_1_0_9"/>
<dbReference type="OrthoDB" id="2361695at2"/>
<dbReference type="Proteomes" id="UP000002513">
    <property type="component" value="Chromosome"/>
</dbReference>
<dbReference type="HAMAP" id="MF_00829">
    <property type="entry name" value="UPF0435"/>
    <property type="match status" value="1"/>
</dbReference>
<dbReference type="InterPro" id="IPR009507">
    <property type="entry name" value="UPF0435"/>
</dbReference>
<dbReference type="Pfam" id="PF06569">
    <property type="entry name" value="DUF1128"/>
    <property type="match status" value="1"/>
</dbReference>
<gene>
    <name type="ordered locus">lin1819</name>
</gene>
<sequence>MNLETPSQENLDFMLAEITTKLKMVNVGVFENLELDSVDYNALTDIYQLIKRKSNFSPREMQLFAEELRRIRK</sequence>